<sequence>MPRAHDDNWDLASSVGATATMVAAGRALATKDPRGLINDPFAEPLVRAVGLDFFTKLIDGELDIATTGNLSPGRAQAMIDGIAVRTKYFDDYFRTATDGGVRQVVILAAGLDARAYRLPWPAGTVVYEIDQPQVIDFKTTTLAGIGAKPTAIRRTVYIDLRADWPAALQAAGLDSTAPTAWLAEGMLIYLPPDPRTGCSTTAPNSVLRAARSLPNLSRALWISTQAGYEKWRIRFASTAWTSTWRRWCIPANAATSSTTCAPRAGTLRAQCGPTYSGAMVCPFPPHTTTIRSAKSSSSAVV</sequence>
<name>Y775_MYCBP</name>
<gene>
    <name type="ordered locus">BCG_0775c</name>
</gene>
<organism>
    <name type="scientific">Mycobacterium bovis (strain BCG / Pasteur 1173P2)</name>
    <dbReference type="NCBI Taxonomy" id="410289"/>
    <lineage>
        <taxon>Bacteria</taxon>
        <taxon>Bacillati</taxon>
        <taxon>Actinomycetota</taxon>
        <taxon>Actinomycetes</taxon>
        <taxon>Mycobacteriales</taxon>
        <taxon>Mycobacteriaceae</taxon>
        <taxon>Mycobacterium</taxon>
        <taxon>Mycobacterium tuberculosis complex</taxon>
    </lineage>
</organism>
<evidence type="ECO:0000250" key="1"/>
<evidence type="ECO:0000305" key="2"/>
<proteinExistence type="inferred from homology"/>
<protein>
    <recommendedName>
        <fullName>Putative S-adenosyl-L-methionine-dependent methyltransferase BCG_0775c</fullName>
        <ecNumber>2.1.1.-</ecNumber>
    </recommendedName>
</protein>
<accession>A1KGK6</accession>
<comment type="function">
    <text evidence="1">Exhibits S-adenosyl-L-methionine-dependent methyltransferase activity.</text>
</comment>
<comment type="similarity">
    <text evidence="2">Belongs to the UPF0677 family.</text>
</comment>
<dbReference type="EC" id="2.1.1.-"/>
<dbReference type="EMBL" id="AM408590">
    <property type="protein sequence ID" value="CAL70761.1"/>
    <property type="molecule type" value="Genomic_DNA"/>
</dbReference>
<dbReference type="SMR" id="A1KGK6"/>
<dbReference type="KEGG" id="mbb:BCG_0775c"/>
<dbReference type="HOGENOM" id="CLU_923843_0_0_11"/>
<dbReference type="Proteomes" id="UP000001472">
    <property type="component" value="Chromosome"/>
</dbReference>
<dbReference type="GO" id="GO:0008168">
    <property type="term" value="F:methyltransferase activity"/>
    <property type="evidence" value="ECO:0007669"/>
    <property type="project" value="UniProtKB-KW"/>
</dbReference>
<dbReference type="GO" id="GO:0032259">
    <property type="term" value="P:methylation"/>
    <property type="evidence" value="ECO:0007669"/>
    <property type="project" value="UniProtKB-KW"/>
</dbReference>
<dbReference type="Gene3D" id="3.40.50.150">
    <property type="entry name" value="Vaccinia Virus protein VP39"/>
    <property type="match status" value="1"/>
</dbReference>
<dbReference type="InterPro" id="IPR007213">
    <property type="entry name" value="Ppm1/Ppm2/Tcmp"/>
</dbReference>
<dbReference type="InterPro" id="IPR029063">
    <property type="entry name" value="SAM-dependent_MTases_sf"/>
</dbReference>
<dbReference type="InterPro" id="IPR011610">
    <property type="entry name" value="SAM_mthyl_Trfase_ML2640-like"/>
</dbReference>
<dbReference type="NCBIfam" id="TIGR00027">
    <property type="entry name" value="mthyl_TIGR00027"/>
    <property type="match status" value="1"/>
</dbReference>
<dbReference type="PANTHER" id="PTHR43619">
    <property type="entry name" value="S-ADENOSYL-L-METHIONINE-DEPENDENT METHYLTRANSFERASE YKTD-RELATED"/>
    <property type="match status" value="1"/>
</dbReference>
<dbReference type="PANTHER" id="PTHR43619:SF2">
    <property type="entry name" value="S-ADENOSYL-L-METHIONINE-DEPENDENT METHYLTRANSFERASES SUPERFAMILY PROTEIN"/>
    <property type="match status" value="1"/>
</dbReference>
<dbReference type="Pfam" id="PF04072">
    <property type="entry name" value="LCM"/>
    <property type="match status" value="1"/>
</dbReference>
<dbReference type="SUPFAM" id="SSF53335">
    <property type="entry name" value="S-adenosyl-L-methionine-dependent methyltransferases"/>
    <property type="match status" value="1"/>
</dbReference>
<feature type="chain" id="PRO_0000361149" description="Putative S-adenosyl-L-methionine-dependent methyltransferase BCG_0775c">
    <location>
        <begin position="1"/>
        <end position="301"/>
    </location>
</feature>
<feature type="binding site" evidence="1">
    <location>
        <position position="130"/>
    </location>
    <ligand>
        <name>S-adenosyl-L-methionine</name>
        <dbReference type="ChEBI" id="CHEBI:59789"/>
    </ligand>
</feature>
<feature type="binding site" evidence="1">
    <location>
        <begin position="159"/>
        <end position="160"/>
    </location>
    <ligand>
        <name>S-adenosyl-L-methionine</name>
        <dbReference type="ChEBI" id="CHEBI:59789"/>
    </ligand>
</feature>
<keyword id="KW-0489">Methyltransferase</keyword>
<keyword id="KW-0949">S-adenosyl-L-methionine</keyword>
<keyword id="KW-0808">Transferase</keyword>
<reference key="1">
    <citation type="journal article" date="2007" name="Proc. Natl. Acad. Sci. U.S.A.">
        <title>Genome plasticity of BCG and impact on vaccine efficacy.</title>
        <authorList>
            <person name="Brosch R."/>
            <person name="Gordon S.V."/>
            <person name="Garnier T."/>
            <person name="Eiglmeier K."/>
            <person name="Frigui W."/>
            <person name="Valenti P."/>
            <person name="Dos Santos S."/>
            <person name="Duthoy S."/>
            <person name="Lacroix C."/>
            <person name="Garcia-Pelayo C."/>
            <person name="Inwald J.K."/>
            <person name="Golby P."/>
            <person name="Garcia J.N."/>
            <person name="Hewinson R.G."/>
            <person name="Behr M.A."/>
            <person name="Quail M.A."/>
            <person name="Churcher C."/>
            <person name="Barrell B.G."/>
            <person name="Parkhill J."/>
            <person name="Cole S.T."/>
        </authorList>
    </citation>
    <scope>NUCLEOTIDE SEQUENCE [LARGE SCALE GENOMIC DNA]</scope>
    <source>
        <strain>BCG / Pasteur 1173P2</strain>
    </source>
</reference>